<accession>B5R6R6</accession>
<comment type="function">
    <text evidence="1">Negatively regulates transcription of bacterial ribonucleotide reductase nrd genes and operons by binding to NrdR-boxes.</text>
</comment>
<comment type="cofactor">
    <cofactor evidence="1">
        <name>Zn(2+)</name>
        <dbReference type="ChEBI" id="CHEBI:29105"/>
    </cofactor>
    <text evidence="1">Binds 1 zinc ion.</text>
</comment>
<comment type="similarity">
    <text evidence="1">Belongs to the NrdR family.</text>
</comment>
<reference key="1">
    <citation type="journal article" date="2008" name="Genome Res.">
        <title>Comparative genome analysis of Salmonella enteritidis PT4 and Salmonella gallinarum 287/91 provides insights into evolutionary and host adaptation pathways.</title>
        <authorList>
            <person name="Thomson N.R."/>
            <person name="Clayton D.J."/>
            <person name="Windhorst D."/>
            <person name="Vernikos G."/>
            <person name="Davidson S."/>
            <person name="Churcher C."/>
            <person name="Quail M.A."/>
            <person name="Stevens M."/>
            <person name="Jones M.A."/>
            <person name="Watson M."/>
            <person name="Barron A."/>
            <person name="Layton A."/>
            <person name="Pickard D."/>
            <person name="Kingsley R.A."/>
            <person name="Bignell A."/>
            <person name="Clark L."/>
            <person name="Harris B."/>
            <person name="Ormond D."/>
            <person name="Abdellah Z."/>
            <person name="Brooks K."/>
            <person name="Cherevach I."/>
            <person name="Chillingworth T."/>
            <person name="Woodward J."/>
            <person name="Norberczak H."/>
            <person name="Lord A."/>
            <person name="Arrowsmith C."/>
            <person name="Jagels K."/>
            <person name="Moule S."/>
            <person name="Mungall K."/>
            <person name="Saunders M."/>
            <person name="Whitehead S."/>
            <person name="Chabalgoity J.A."/>
            <person name="Maskell D."/>
            <person name="Humphreys T."/>
            <person name="Roberts M."/>
            <person name="Barrow P.A."/>
            <person name="Dougan G."/>
            <person name="Parkhill J."/>
        </authorList>
    </citation>
    <scope>NUCLEOTIDE SEQUENCE [LARGE SCALE GENOMIC DNA]</scope>
    <source>
        <strain>287/91 / NCTC 13346</strain>
    </source>
</reference>
<sequence length="149" mass="17198">MHCPFCFAVDTKVIDSRLVGEGSSVRRRRQCLVCNERFTTFEVAELVMPRVIKSNDVREPFNEDKLRSGMLRALEKRPVSADDVEMALNHIKSQLRATGEREVPSKMIGNLVMEQLKKLDKVAYIRFASVYRSFEDIKDFGEEIARLQD</sequence>
<organism>
    <name type="scientific">Salmonella gallinarum (strain 287/91 / NCTC 13346)</name>
    <dbReference type="NCBI Taxonomy" id="550538"/>
    <lineage>
        <taxon>Bacteria</taxon>
        <taxon>Pseudomonadati</taxon>
        <taxon>Pseudomonadota</taxon>
        <taxon>Gammaproteobacteria</taxon>
        <taxon>Enterobacterales</taxon>
        <taxon>Enterobacteriaceae</taxon>
        <taxon>Salmonella</taxon>
    </lineage>
</organism>
<feature type="chain" id="PRO_1000124543" description="Transcriptional repressor NrdR">
    <location>
        <begin position="1"/>
        <end position="149"/>
    </location>
</feature>
<feature type="domain" description="ATP-cone" evidence="1">
    <location>
        <begin position="49"/>
        <end position="139"/>
    </location>
</feature>
<feature type="zinc finger region" evidence="1">
    <location>
        <begin position="3"/>
        <end position="34"/>
    </location>
</feature>
<gene>
    <name evidence="1" type="primary">nrdR</name>
    <name type="ordered locus">SG0426</name>
</gene>
<proteinExistence type="inferred from homology"/>
<evidence type="ECO:0000255" key="1">
    <source>
        <dbReference type="HAMAP-Rule" id="MF_00440"/>
    </source>
</evidence>
<dbReference type="EMBL" id="AM933173">
    <property type="protein sequence ID" value="CAR36325.1"/>
    <property type="molecule type" value="Genomic_DNA"/>
</dbReference>
<dbReference type="RefSeq" id="WP_000543533.1">
    <property type="nucleotide sequence ID" value="NC_011274.1"/>
</dbReference>
<dbReference type="SMR" id="B5R6R6"/>
<dbReference type="GeneID" id="66754886"/>
<dbReference type="KEGG" id="seg:SG0426"/>
<dbReference type="HOGENOM" id="CLU_108412_0_0_6"/>
<dbReference type="Proteomes" id="UP000008321">
    <property type="component" value="Chromosome"/>
</dbReference>
<dbReference type="GO" id="GO:0005524">
    <property type="term" value="F:ATP binding"/>
    <property type="evidence" value="ECO:0007669"/>
    <property type="project" value="UniProtKB-KW"/>
</dbReference>
<dbReference type="GO" id="GO:0003677">
    <property type="term" value="F:DNA binding"/>
    <property type="evidence" value="ECO:0007669"/>
    <property type="project" value="UniProtKB-KW"/>
</dbReference>
<dbReference type="GO" id="GO:0008270">
    <property type="term" value="F:zinc ion binding"/>
    <property type="evidence" value="ECO:0007669"/>
    <property type="project" value="UniProtKB-UniRule"/>
</dbReference>
<dbReference type="GO" id="GO:0045892">
    <property type="term" value="P:negative regulation of DNA-templated transcription"/>
    <property type="evidence" value="ECO:0007669"/>
    <property type="project" value="UniProtKB-UniRule"/>
</dbReference>
<dbReference type="HAMAP" id="MF_00440">
    <property type="entry name" value="NrdR"/>
    <property type="match status" value="1"/>
</dbReference>
<dbReference type="InterPro" id="IPR005144">
    <property type="entry name" value="ATP-cone_dom"/>
</dbReference>
<dbReference type="InterPro" id="IPR055173">
    <property type="entry name" value="NrdR-like_N"/>
</dbReference>
<dbReference type="InterPro" id="IPR003796">
    <property type="entry name" value="RNR_NrdR-like"/>
</dbReference>
<dbReference type="NCBIfam" id="TIGR00244">
    <property type="entry name" value="transcriptional regulator NrdR"/>
    <property type="match status" value="1"/>
</dbReference>
<dbReference type="PANTHER" id="PTHR30455">
    <property type="entry name" value="TRANSCRIPTIONAL REPRESSOR NRDR"/>
    <property type="match status" value="1"/>
</dbReference>
<dbReference type="PANTHER" id="PTHR30455:SF2">
    <property type="entry name" value="TRANSCRIPTIONAL REPRESSOR NRDR"/>
    <property type="match status" value="1"/>
</dbReference>
<dbReference type="Pfam" id="PF03477">
    <property type="entry name" value="ATP-cone"/>
    <property type="match status" value="1"/>
</dbReference>
<dbReference type="Pfam" id="PF22811">
    <property type="entry name" value="Zn_ribbon_NrdR"/>
    <property type="match status" value="1"/>
</dbReference>
<dbReference type="PROSITE" id="PS51161">
    <property type="entry name" value="ATP_CONE"/>
    <property type="match status" value="1"/>
</dbReference>
<name>NRDR_SALG2</name>
<keyword id="KW-0067">ATP-binding</keyword>
<keyword id="KW-0238">DNA-binding</keyword>
<keyword id="KW-0479">Metal-binding</keyword>
<keyword id="KW-0547">Nucleotide-binding</keyword>
<keyword id="KW-0678">Repressor</keyword>
<keyword id="KW-0804">Transcription</keyword>
<keyword id="KW-0805">Transcription regulation</keyword>
<keyword id="KW-0862">Zinc</keyword>
<keyword id="KW-0863">Zinc-finger</keyword>
<protein>
    <recommendedName>
        <fullName evidence="1">Transcriptional repressor NrdR</fullName>
    </recommendedName>
</protein>